<gene>
    <name evidence="1" type="primary">wecF</name>
    <name evidence="1" type="synonym">rffT</name>
    <name type="ordered locus">ECP_3984</name>
</gene>
<organism>
    <name type="scientific">Escherichia coli O6:K15:H31 (strain 536 / UPEC)</name>
    <dbReference type="NCBI Taxonomy" id="362663"/>
    <lineage>
        <taxon>Bacteria</taxon>
        <taxon>Pseudomonadati</taxon>
        <taxon>Pseudomonadota</taxon>
        <taxon>Gammaproteobacteria</taxon>
        <taxon>Enterobacterales</taxon>
        <taxon>Enterobacteriaceae</taxon>
        <taxon>Escherichia</taxon>
    </lineage>
</organism>
<evidence type="ECO:0000255" key="1">
    <source>
        <dbReference type="HAMAP-Rule" id="MF_01002"/>
    </source>
</evidence>
<accession>Q0TAT1</accession>
<dbReference type="EC" id="2.4.1.325" evidence="1"/>
<dbReference type="EMBL" id="CP000247">
    <property type="protein sequence ID" value="ABG71948.1"/>
    <property type="molecule type" value="Genomic_DNA"/>
</dbReference>
<dbReference type="RefSeq" id="WP_000217223.1">
    <property type="nucleotide sequence ID" value="NC_008253.1"/>
</dbReference>
<dbReference type="SMR" id="Q0TAT1"/>
<dbReference type="CAZy" id="GT56">
    <property type="family name" value="Glycosyltransferase Family 56"/>
</dbReference>
<dbReference type="KEGG" id="ecp:ECP_3984"/>
<dbReference type="HOGENOM" id="CLU_066584_0_0_6"/>
<dbReference type="UniPathway" id="UPA00566"/>
<dbReference type="Proteomes" id="UP000009182">
    <property type="component" value="Chromosome"/>
</dbReference>
<dbReference type="GO" id="GO:0005886">
    <property type="term" value="C:plasma membrane"/>
    <property type="evidence" value="ECO:0007669"/>
    <property type="project" value="UniProtKB-SubCell"/>
</dbReference>
<dbReference type="GO" id="GO:0102031">
    <property type="term" value="F:4-acetamido-4,6-dideoxy-D-galactose transferase activity"/>
    <property type="evidence" value="ECO:0007669"/>
    <property type="project" value="UniProtKB-EC"/>
</dbReference>
<dbReference type="GO" id="GO:0008417">
    <property type="term" value="F:fucosyltransferase activity"/>
    <property type="evidence" value="ECO:0007669"/>
    <property type="project" value="InterPro"/>
</dbReference>
<dbReference type="GO" id="GO:0009246">
    <property type="term" value="P:enterobacterial common antigen biosynthetic process"/>
    <property type="evidence" value="ECO:0007669"/>
    <property type="project" value="UniProtKB-UniRule"/>
</dbReference>
<dbReference type="GO" id="GO:0036065">
    <property type="term" value="P:fucosylation"/>
    <property type="evidence" value="ECO:0007669"/>
    <property type="project" value="InterPro"/>
</dbReference>
<dbReference type="HAMAP" id="MF_01002">
    <property type="entry name" value="WecF_RffT"/>
    <property type="match status" value="1"/>
</dbReference>
<dbReference type="InterPro" id="IPR009993">
    <property type="entry name" value="WecF"/>
</dbReference>
<dbReference type="NCBIfam" id="NF002752">
    <property type="entry name" value="PRK02797.1-1"/>
    <property type="match status" value="1"/>
</dbReference>
<dbReference type="NCBIfam" id="NF002753">
    <property type="entry name" value="PRK02797.1-2"/>
    <property type="match status" value="1"/>
</dbReference>
<dbReference type="NCBIfam" id="NF002754">
    <property type="entry name" value="PRK02797.1-3"/>
    <property type="match status" value="1"/>
</dbReference>
<dbReference type="Pfam" id="PF07429">
    <property type="entry name" value="Glyco_transf_56"/>
    <property type="match status" value="1"/>
</dbReference>
<name>WECF_ECOL5</name>
<protein>
    <recommendedName>
        <fullName evidence="1">TDP-N-acetylfucosamine:lipid II N-acetylfucosaminyltransferase</fullName>
        <ecNumber evidence="1">2.4.1.325</ecNumber>
    </recommendedName>
    <alternativeName>
        <fullName evidence="1">4-alpha-L-fucosyltransferase</fullName>
    </alternativeName>
    <alternativeName>
        <fullName evidence="1">TDP-Fuc4NAc:lipid II Fuc4NAc transferase</fullName>
        <shortName evidence="1">Fuc4NAc transferase</shortName>
    </alternativeName>
</protein>
<proteinExistence type="inferred from homology"/>
<reference key="1">
    <citation type="journal article" date="2006" name="Mol. Microbiol.">
        <title>Role of pathogenicity island-associated integrases in the genome plasticity of uropathogenic Escherichia coli strain 536.</title>
        <authorList>
            <person name="Hochhut B."/>
            <person name="Wilde C."/>
            <person name="Balling G."/>
            <person name="Middendorf B."/>
            <person name="Dobrindt U."/>
            <person name="Brzuszkiewicz E."/>
            <person name="Gottschalk G."/>
            <person name="Carniel E."/>
            <person name="Hacker J."/>
        </authorList>
    </citation>
    <scope>NUCLEOTIDE SEQUENCE [LARGE SCALE GENOMIC DNA]</scope>
    <source>
        <strain>536 / UPEC</strain>
    </source>
</reference>
<comment type="function">
    <text evidence="1">Catalyzes the synthesis of Und-PP-GlcNAc-ManNAcA-Fuc4NAc (Lipid III), the third lipid-linked intermediate involved in ECA synthesis.</text>
</comment>
<comment type="catalytic activity">
    <reaction evidence="1">
        <text>beta-D-ManNAcA-(1-&gt;4)-alpha-D-GlcNAc-di-trans,octa-cis-undecaprenyl diphosphate + dTDP-4-acetamido-4,6-dideoxy-alpha-D-galactose = alpha-D-FucNAc4-(1-&gt;4)-beta-D-ManNAcA-(1-&gt;4)-D-GlcNAc-undecaprenyl diphosphate + dTDP + H(+)</text>
        <dbReference type="Rhea" id="RHEA:28759"/>
        <dbReference type="ChEBI" id="CHEBI:15378"/>
        <dbReference type="ChEBI" id="CHEBI:58369"/>
        <dbReference type="ChEBI" id="CHEBI:61495"/>
        <dbReference type="ChEBI" id="CHEBI:61496"/>
        <dbReference type="ChEBI" id="CHEBI:68493"/>
        <dbReference type="EC" id="2.4.1.325"/>
    </reaction>
</comment>
<comment type="pathway">
    <text evidence="1">Bacterial outer membrane biogenesis; enterobacterial common antigen biosynthesis.</text>
</comment>
<comment type="subcellular location">
    <subcellularLocation>
        <location evidence="1">Cell inner membrane</location>
        <topology evidence="1">Peripheral membrane protein</topology>
    </subcellularLocation>
</comment>
<comment type="similarity">
    <text evidence="1">Belongs to the glycosyltransferase 56 family.</text>
</comment>
<sequence length="359" mass="40600">MTVLIHVLGSDIPHHNRTVLRFFNDALAATSEHAREFMVVGKDDGLSDSCPALSVQFFPGKKSLAEAVIAKAKANRQQRFFFHGQFNPKLWLALLSGGIKPSQFFWHIWGADLYELSSGLRYKLFYPLRRLAQKRVGCVFATRGDLSFFAKTHPKVRGELLYFPTRMDPSLNTMANDRQREGKMTILVGNSGDRSNEHIAALRAVHQQFGDTVKVVVPMGYPPNNEAYIEEVRQAGLELFSEENLQVLSEKLEFDAYLTLLRQCDLGYFIFARQQGIGTLCLLIQAGIPCVLNRENPFWQDMTEQHLPVLFTTDDLNEDIVREAQRQLASVDKNTIAFFSPNYLQGWQRALAIAAGEVA</sequence>
<keyword id="KW-0997">Cell inner membrane</keyword>
<keyword id="KW-1003">Cell membrane</keyword>
<keyword id="KW-0328">Glycosyltransferase</keyword>
<keyword id="KW-0472">Membrane</keyword>
<keyword id="KW-0808">Transferase</keyword>
<feature type="chain" id="PRO_1000062743" description="TDP-N-acetylfucosamine:lipid II N-acetylfucosaminyltransferase">
    <location>
        <begin position="1"/>
        <end position="359"/>
    </location>
</feature>